<reference key="1">
    <citation type="journal article" date="1994" name="Gene">
        <title>A manganese superoxide dismutase-encoding cDNA from Drosophila melanogaster.</title>
        <authorList>
            <person name="Duttaroy A."/>
            <person name="Meidinger R."/>
            <person name="Kirby K."/>
            <person name="Carmichael S."/>
            <person name="Hilliker A."/>
            <person name="Phillips J."/>
        </authorList>
    </citation>
    <scope>NUCLEOTIDE SEQUENCE [MRNA]</scope>
    <source>
        <strain>Canton-S</strain>
    </source>
</reference>
<reference key="2">
    <citation type="submission" date="1994-07" db="EMBL/GenBank/DDBJ databases">
        <title>Sequence analysis of a genomic clone encoding for manganese superoxide dismutase (mnSOD) in D. melanogaster.</title>
        <authorList>
            <person name="Phillips J.P."/>
            <person name="Kirby K."/>
        </authorList>
    </citation>
    <scope>NUCLEOTIDE SEQUENCE [GENOMIC DNA]</scope>
    <source>
        <strain>Canton-S</strain>
    </source>
</reference>
<reference key="3">
    <citation type="journal article" date="2000" name="Science">
        <title>The genome sequence of Drosophila melanogaster.</title>
        <authorList>
            <person name="Adams M.D."/>
            <person name="Celniker S.E."/>
            <person name="Holt R.A."/>
            <person name="Evans C.A."/>
            <person name="Gocayne J.D."/>
            <person name="Amanatides P.G."/>
            <person name="Scherer S.E."/>
            <person name="Li P.W."/>
            <person name="Hoskins R.A."/>
            <person name="Galle R.F."/>
            <person name="George R.A."/>
            <person name="Lewis S.E."/>
            <person name="Richards S."/>
            <person name="Ashburner M."/>
            <person name="Henderson S.N."/>
            <person name="Sutton G.G."/>
            <person name="Wortman J.R."/>
            <person name="Yandell M.D."/>
            <person name="Zhang Q."/>
            <person name="Chen L.X."/>
            <person name="Brandon R.C."/>
            <person name="Rogers Y.-H.C."/>
            <person name="Blazej R.G."/>
            <person name="Champe M."/>
            <person name="Pfeiffer B.D."/>
            <person name="Wan K.H."/>
            <person name="Doyle C."/>
            <person name="Baxter E.G."/>
            <person name="Helt G."/>
            <person name="Nelson C.R."/>
            <person name="Miklos G.L.G."/>
            <person name="Abril J.F."/>
            <person name="Agbayani A."/>
            <person name="An H.-J."/>
            <person name="Andrews-Pfannkoch C."/>
            <person name="Baldwin D."/>
            <person name="Ballew R.M."/>
            <person name="Basu A."/>
            <person name="Baxendale J."/>
            <person name="Bayraktaroglu L."/>
            <person name="Beasley E.M."/>
            <person name="Beeson K.Y."/>
            <person name="Benos P.V."/>
            <person name="Berman B.P."/>
            <person name="Bhandari D."/>
            <person name="Bolshakov S."/>
            <person name="Borkova D."/>
            <person name="Botchan M.R."/>
            <person name="Bouck J."/>
            <person name="Brokstein P."/>
            <person name="Brottier P."/>
            <person name="Burtis K.C."/>
            <person name="Busam D.A."/>
            <person name="Butler H."/>
            <person name="Cadieu E."/>
            <person name="Center A."/>
            <person name="Chandra I."/>
            <person name="Cherry J.M."/>
            <person name="Cawley S."/>
            <person name="Dahlke C."/>
            <person name="Davenport L.B."/>
            <person name="Davies P."/>
            <person name="de Pablos B."/>
            <person name="Delcher A."/>
            <person name="Deng Z."/>
            <person name="Mays A.D."/>
            <person name="Dew I."/>
            <person name="Dietz S.M."/>
            <person name="Dodson K."/>
            <person name="Doup L.E."/>
            <person name="Downes M."/>
            <person name="Dugan-Rocha S."/>
            <person name="Dunkov B.C."/>
            <person name="Dunn P."/>
            <person name="Durbin K.J."/>
            <person name="Evangelista C.C."/>
            <person name="Ferraz C."/>
            <person name="Ferriera S."/>
            <person name="Fleischmann W."/>
            <person name="Fosler C."/>
            <person name="Gabrielian A.E."/>
            <person name="Garg N.S."/>
            <person name="Gelbart W.M."/>
            <person name="Glasser K."/>
            <person name="Glodek A."/>
            <person name="Gong F."/>
            <person name="Gorrell J.H."/>
            <person name="Gu Z."/>
            <person name="Guan P."/>
            <person name="Harris M."/>
            <person name="Harris N.L."/>
            <person name="Harvey D.A."/>
            <person name="Heiman T.J."/>
            <person name="Hernandez J.R."/>
            <person name="Houck J."/>
            <person name="Hostin D."/>
            <person name="Houston K.A."/>
            <person name="Howland T.J."/>
            <person name="Wei M.-H."/>
            <person name="Ibegwam C."/>
            <person name="Jalali M."/>
            <person name="Kalush F."/>
            <person name="Karpen G.H."/>
            <person name="Ke Z."/>
            <person name="Kennison J.A."/>
            <person name="Ketchum K.A."/>
            <person name="Kimmel B.E."/>
            <person name="Kodira C.D."/>
            <person name="Kraft C.L."/>
            <person name="Kravitz S."/>
            <person name="Kulp D."/>
            <person name="Lai Z."/>
            <person name="Lasko P."/>
            <person name="Lei Y."/>
            <person name="Levitsky A.A."/>
            <person name="Li J.H."/>
            <person name="Li Z."/>
            <person name="Liang Y."/>
            <person name="Lin X."/>
            <person name="Liu X."/>
            <person name="Mattei B."/>
            <person name="McIntosh T.C."/>
            <person name="McLeod M.P."/>
            <person name="McPherson D."/>
            <person name="Merkulov G."/>
            <person name="Milshina N.V."/>
            <person name="Mobarry C."/>
            <person name="Morris J."/>
            <person name="Moshrefi A."/>
            <person name="Mount S.M."/>
            <person name="Moy M."/>
            <person name="Murphy B."/>
            <person name="Murphy L."/>
            <person name="Muzny D.M."/>
            <person name="Nelson D.L."/>
            <person name="Nelson D.R."/>
            <person name="Nelson K.A."/>
            <person name="Nixon K."/>
            <person name="Nusskern D.R."/>
            <person name="Pacleb J.M."/>
            <person name="Palazzolo M."/>
            <person name="Pittman G.S."/>
            <person name="Pan S."/>
            <person name="Pollard J."/>
            <person name="Puri V."/>
            <person name="Reese M.G."/>
            <person name="Reinert K."/>
            <person name="Remington K."/>
            <person name="Saunders R.D.C."/>
            <person name="Scheeler F."/>
            <person name="Shen H."/>
            <person name="Shue B.C."/>
            <person name="Siden-Kiamos I."/>
            <person name="Simpson M."/>
            <person name="Skupski M.P."/>
            <person name="Smith T.J."/>
            <person name="Spier E."/>
            <person name="Spradling A.C."/>
            <person name="Stapleton M."/>
            <person name="Strong R."/>
            <person name="Sun E."/>
            <person name="Svirskas R."/>
            <person name="Tector C."/>
            <person name="Turner R."/>
            <person name="Venter E."/>
            <person name="Wang A.H."/>
            <person name="Wang X."/>
            <person name="Wang Z.-Y."/>
            <person name="Wassarman D.A."/>
            <person name="Weinstock G.M."/>
            <person name="Weissenbach J."/>
            <person name="Williams S.M."/>
            <person name="Woodage T."/>
            <person name="Worley K.C."/>
            <person name="Wu D."/>
            <person name="Yang S."/>
            <person name="Yao Q.A."/>
            <person name="Ye J."/>
            <person name="Yeh R.-F."/>
            <person name="Zaveri J.S."/>
            <person name="Zhan M."/>
            <person name="Zhang G."/>
            <person name="Zhao Q."/>
            <person name="Zheng L."/>
            <person name="Zheng X.H."/>
            <person name="Zhong F.N."/>
            <person name="Zhong W."/>
            <person name="Zhou X."/>
            <person name="Zhu S.C."/>
            <person name="Zhu X."/>
            <person name="Smith H.O."/>
            <person name="Gibbs R.A."/>
            <person name="Myers E.W."/>
            <person name="Rubin G.M."/>
            <person name="Venter J.C."/>
        </authorList>
    </citation>
    <scope>NUCLEOTIDE SEQUENCE [LARGE SCALE GENOMIC DNA]</scope>
    <source>
        <strain>Berkeley</strain>
    </source>
</reference>
<reference key="4">
    <citation type="journal article" date="2002" name="Genome Biol.">
        <title>Annotation of the Drosophila melanogaster euchromatic genome: a systematic review.</title>
        <authorList>
            <person name="Misra S."/>
            <person name="Crosby M.A."/>
            <person name="Mungall C.J."/>
            <person name="Matthews B.B."/>
            <person name="Campbell K.S."/>
            <person name="Hradecky P."/>
            <person name="Huang Y."/>
            <person name="Kaminker J.S."/>
            <person name="Millburn G.H."/>
            <person name="Prochnik S.E."/>
            <person name="Smith C.D."/>
            <person name="Tupy J.L."/>
            <person name="Whitfield E.J."/>
            <person name="Bayraktaroglu L."/>
            <person name="Berman B.P."/>
            <person name="Bettencourt B.R."/>
            <person name="Celniker S.E."/>
            <person name="de Grey A.D.N.J."/>
            <person name="Drysdale R.A."/>
            <person name="Harris N.L."/>
            <person name="Richter J."/>
            <person name="Russo S."/>
            <person name="Schroeder A.J."/>
            <person name="Shu S.Q."/>
            <person name="Stapleton M."/>
            <person name="Yamada C."/>
            <person name="Ashburner M."/>
            <person name="Gelbart W.M."/>
            <person name="Rubin G.M."/>
            <person name="Lewis S.E."/>
        </authorList>
    </citation>
    <scope>GENOME REANNOTATION</scope>
    <source>
        <strain>Berkeley</strain>
    </source>
</reference>
<reference key="5">
    <citation type="submission" date="2003-02" db="EMBL/GenBank/DDBJ databases">
        <authorList>
            <person name="Stapleton M."/>
            <person name="Brokstein P."/>
            <person name="Hong L."/>
            <person name="Agbayani A."/>
            <person name="Carlson J.W."/>
            <person name="Champe M."/>
            <person name="Chavez C."/>
            <person name="Dorsett V."/>
            <person name="Dresnek D."/>
            <person name="Farfan D."/>
            <person name="Frise E."/>
            <person name="George R.A."/>
            <person name="Gonzalez M."/>
            <person name="Guarin H."/>
            <person name="Kronmiller B."/>
            <person name="Li P.W."/>
            <person name="Liao G."/>
            <person name="Miranda A."/>
            <person name="Mungall C.J."/>
            <person name="Nunoo J."/>
            <person name="Pacleb J.M."/>
            <person name="Paragas V."/>
            <person name="Park S."/>
            <person name="Patel S."/>
            <person name="Phouanenavong S."/>
            <person name="Wan K.H."/>
            <person name="Yu C."/>
            <person name="Lewis S.E."/>
            <person name="Rubin G.M."/>
            <person name="Celniker S.E."/>
        </authorList>
    </citation>
    <scope>NUCLEOTIDE SEQUENCE [LARGE SCALE MRNA]</scope>
    <source>
        <strain>Berkeley</strain>
        <tissue>Head</tissue>
    </source>
</reference>
<reference key="6">
    <citation type="journal article" date="1992" name="J. Mol. Evol.">
        <title>A comparison of evolutionary rates of the two major kinds of superoxide dismutase.</title>
        <authorList>
            <person name="Smith M.W."/>
            <person name="Doolittle R.F."/>
        </authorList>
    </citation>
    <scope>NUCLEOTIDE SEQUENCE [MRNA] OF 34-176</scope>
    <source>
        <strain>Oregon-R</strain>
    </source>
</reference>
<organism>
    <name type="scientific">Drosophila melanogaster</name>
    <name type="common">Fruit fly</name>
    <dbReference type="NCBI Taxonomy" id="7227"/>
    <lineage>
        <taxon>Eukaryota</taxon>
        <taxon>Metazoa</taxon>
        <taxon>Ecdysozoa</taxon>
        <taxon>Arthropoda</taxon>
        <taxon>Hexapoda</taxon>
        <taxon>Insecta</taxon>
        <taxon>Pterygota</taxon>
        <taxon>Neoptera</taxon>
        <taxon>Endopterygota</taxon>
        <taxon>Diptera</taxon>
        <taxon>Brachycera</taxon>
        <taxon>Muscomorpha</taxon>
        <taxon>Ephydroidea</taxon>
        <taxon>Drosophilidae</taxon>
        <taxon>Drosophila</taxon>
        <taxon>Sophophora</taxon>
    </lineage>
</organism>
<keyword id="KW-0464">Manganese</keyword>
<keyword id="KW-0479">Metal-binding</keyword>
<keyword id="KW-0496">Mitochondrion</keyword>
<keyword id="KW-0560">Oxidoreductase</keyword>
<keyword id="KW-1185">Reference proteome</keyword>
<keyword id="KW-0809">Transit peptide</keyword>
<sequence length="217" mass="24684">MFVARKISPNCKPGVRGKHTLPKLPYDYAALEPIICREIMELHHQKHHQTYVNNLNAAEEQLEEAKSKSDTTKLIQLAPALRFNGGGHINHTIFWQNLSPNKTQPSDDLKKAIESQWKSLEEFKKELTTLTVAVQGSGWGWLGFNKKSGKLQLAALPNQDPLEASTGLIPLFGIDVWEHAYYLQYKNVRPSYVEAIWDIANWDDISCRFQEAKKLGC</sequence>
<feature type="transit peptide" description="Mitochondrion" evidence="1">
    <location>
        <begin position="1"/>
        <end position="17"/>
    </location>
</feature>
<feature type="chain" id="PRO_0000032879" description="Superoxide dismutase [Mn], mitochondrial">
    <location>
        <begin position="18"/>
        <end position="217"/>
    </location>
</feature>
<feature type="binding site" evidence="1">
    <location>
        <position position="43"/>
    </location>
    <ligand>
        <name>Mn(2+)</name>
        <dbReference type="ChEBI" id="CHEBI:29035"/>
    </ligand>
</feature>
<feature type="binding site" evidence="1">
    <location>
        <position position="91"/>
    </location>
    <ligand>
        <name>Mn(2+)</name>
        <dbReference type="ChEBI" id="CHEBI:29035"/>
    </ligand>
</feature>
<feature type="binding site" evidence="1">
    <location>
        <position position="175"/>
    </location>
    <ligand>
        <name>Mn(2+)</name>
        <dbReference type="ChEBI" id="CHEBI:29035"/>
    </ligand>
</feature>
<feature type="binding site" evidence="1">
    <location>
        <position position="179"/>
    </location>
    <ligand>
        <name>Mn(2+)</name>
        <dbReference type="ChEBI" id="CHEBI:29035"/>
    </ligand>
</feature>
<feature type="sequence conflict" description="In Ref. 2 and 3." evidence="2" ref="2 3">
    <original>PNCKPG</original>
    <variation>QTASLA</variation>
    <location>
        <begin position="9"/>
        <end position="14"/>
    </location>
</feature>
<feature type="sequence conflict" description="In Ref. 6; CAA45418." evidence="2" ref="6">
    <original>L</original>
    <variation>V</variation>
    <location>
        <position position="127"/>
    </location>
</feature>
<accession>Q00637</accession>
<accession>Q9V7T8</accession>
<name>SODM_DROME</name>
<protein>
    <recommendedName>
        <fullName>Superoxide dismutase [Mn], mitochondrial</fullName>
        <ecNumber>1.15.1.1</ecNumber>
    </recommendedName>
</protein>
<gene>
    <name type="primary">Sod2</name>
    <name type="ORF">CG8905</name>
</gene>
<proteinExistence type="evidence at transcript level"/>
<evidence type="ECO:0000250" key="1"/>
<evidence type="ECO:0000305" key="2"/>
<dbReference type="EC" id="1.15.1.1"/>
<dbReference type="EMBL" id="L18947">
    <property type="protein sequence ID" value="AAA20533.1"/>
    <property type="molecule type" value="mRNA"/>
</dbReference>
<dbReference type="EMBL" id="L34276">
    <property type="protein sequence ID" value="AAA28694.1"/>
    <property type="molecule type" value="Genomic_DNA"/>
</dbReference>
<dbReference type="EMBL" id="AE013599">
    <property type="protein sequence ID" value="AAF57955.1"/>
    <property type="molecule type" value="Genomic_DNA"/>
</dbReference>
<dbReference type="EMBL" id="BT004505">
    <property type="protein sequence ID" value="AAO42669.1"/>
    <property type="molecule type" value="mRNA"/>
</dbReference>
<dbReference type="EMBL" id="X64062">
    <property type="protein sequence ID" value="CAA45418.1"/>
    <property type="molecule type" value="mRNA"/>
</dbReference>
<dbReference type="PIR" id="S23657">
    <property type="entry name" value="S23657"/>
</dbReference>
<dbReference type="RefSeq" id="NP_001286503.1">
    <property type="nucleotide sequence ID" value="NM_001299574.1"/>
</dbReference>
<dbReference type="RefSeq" id="NP_476925.1">
    <property type="nucleotide sequence ID" value="NM_057577.4"/>
</dbReference>
<dbReference type="SMR" id="Q00637"/>
<dbReference type="BioGRID" id="62587">
    <property type="interactions" value="21"/>
</dbReference>
<dbReference type="FunCoup" id="Q00637">
    <property type="interactions" value="881"/>
</dbReference>
<dbReference type="IntAct" id="Q00637">
    <property type="interactions" value="88"/>
</dbReference>
<dbReference type="STRING" id="7227.FBpp0311603"/>
<dbReference type="Allergome" id="868">
    <property type="allergen name" value="Dro m MnSOD"/>
</dbReference>
<dbReference type="PaxDb" id="7227-FBpp0086226"/>
<dbReference type="DNASU" id="36878"/>
<dbReference type="GeneID" id="36878"/>
<dbReference type="KEGG" id="dme:Dmel_CG8905"/>
<dbReference type="AGR" id="FB:FBgn0010213"/>
<dbReference type="CTD" id="6648"/>
<dbReference type="FlyBase" id="FBgn0010213">
    <property type="gene designation" value="Sod2"/>
</dbReference>
<dbReference type="VEuPathDB" id="VectorBase:FBgn0010213"/>
<dbReference type="eggNOG" id="KOG0876">
    <property type="taxonomic scope" value="Eukaryota"/>
</dbReference>
<dbReference type="HOGENOM" id="CLU_031625_2_1_1"/>
<dbReference type="InParanoid" id="Q00637"/>
<dbReference type="OrthoDB" id="239262at2759"/>
<dbReference type="PhylomeDB" id="Q00637"/>
<dbReference type="Reactome" id="R-DME-3299685">
    <property type="pathway name" value="Detoxification of Reactive Oxygen Species"/>
</dbReference>
<dbReference type="BioGRID-ORCS" id="36878">
    <property type="hits" value="0 hits in 1 CRISPR screen"/>
</dbReference>
<dbReference type="GenomeRNAi" id="36878"/>
<dbReference type="PRO" id="PR:Q00637"/>
<dbReference type="Proteomes" id="UP000000803">
    <property type="component" value="Chromosome 2R"/>
</dbReference>
<dbReference type="ExpressionAtlas" id="Q00637">
    <property type="expression patterns" value="baseline and differential"/>
</dbReference>
<dbReference type="GO" id="GO:0005759">
    <property type="term" value="C:mitochondrial matrix"/>
    <property type="evidence" value="ECO:0000250"/>
    <property type="project" value="FlyBase"/>
</dbReference>
<dbReference type="GO" id="GO:0005739">
    <property type="term" value="C:mitochondrion"/>
    <property type="evidence" value="ECO:0000318"/>
    <property type="project" value="GO_Central"/>
</dbReference>
<dbReference type="GO" id="GO:0016209">
    <property type="term" value="F:antioxidant activity"/>
    <property type="evidence" value="ECO:0000303"/>
    <property type="project" value="FlyBase"/>
</dbReference>
<dbReference type="GO" id="GO:0030145">
    <property type="term" value="F:manganese ion binding"/>
    <property type="evidence" value="ECO:0000318"/>
    <property type="project" value="GO_Central"/>
</dbReference>
<dbReference type="GO" id="GO:0004784">
    <property type="term" value="F:superoxide dismutase activity"/>
    <property type="evidence" value="ECO:0000250"/>
    <property type="project" value="FlyBase"/>
</dbReference>
<dbReference type="GO" id="GO:0008340">
    <property type="term" value="P:determination of adult lifespan"/>
    <property type="evidence" value="ECO:0000315"/>
    <property type="project" value="FlyBase"/>
</dbReference>
<dbReference type="GO" id="GO:0003007">
    <property type="term" value="P:heart morphogenesis"/>
    <property type="evidence" value="ECO:0000315"/>
    <property type="project" value="FlyBase"/>
</dbReference>
<dbReference type="GO" id="GO:0038001">
    <property type="term" value="P:paracrine signaling"/>
    <property type="evidence" value="ECO:0000315"/>
    <property type="project" value="FlyBase"/>
</dbReference>
<dbReference type="GO" id="GO:1901526">
    <property type="term" value="P:positive regulation of mitophagy"/>
    <property type="evidence" value="ECO:0000316"/>
    <property type="project" value="FlyBase"/>
</dbReference>
<dbReference type="GO" id="GO:0072593">
    <property type="term" value="P:reactive oxygen species metabolic process"/>
    <property type="evidence" value="ECO:0000315"/>
    <property type="project" value="FlyBase"/>
</dbReference>
<dbReference type="GO" id="GO:0035206">
    <property type="term" value="P:regulation of hemocyte proliferation"/>
    <property type="evidence" value="ECO:0000315"/>
    <property type="project" value="FlyBase"/>
</dbReference>
<dbReference type="GO" id="GO:0019222">
    <property type="term" value="P:regulation of metabolic process"/>
    <property type="evidence" value="ECO:0000315"/>
    <property type="project" value="FlyBase"/>
</dbReference>
<dbReference type="GO" id="GO:0048167">
    <property type="term" value="P:regulation of synaptic plasticity"/>
    <property type="evidence" value="ECO:0000315"/>
    <property type="project" value="UniProtKB"/>
</dbReference>
<dbReference type="GO" id="GO:0019430">
    <property type="term" value="P:removal of superoxide radicals"/>
    <property type="evidence" value="ECO:0000250"/>
    <property type="project" value="FlyBase"/>
</dbReference>
<dbReference type="FunFam" id="1.10.287.990:FF:000001">
    <property type="entry name" value="Superoxide dismutase"/>
    <property type="match status" value="1"/>
</dbReference>
<dbReference type="FunFam" id="3.55.40.20:FF:000002">
    <property type="entry name" value="Superoxide dismutase"/>
    <property type="match status" value="1"/>
</dbReference>
<dbReference type="Gene3D" id="1.10.287.990">
    <property type="entry name" value="Fe,Mn superoxide dismutase (SOD) domain"/>
    <property type="match status" value="1"/>
</dbReference>
<dbReference type="Gene3D" id="3.55.40.20">
    <property type="entry name" value="Iron/manganese superoxide dismutase, C-terminal domain"/>
    <property type="match status" value="1"/>
</dbReference>
<dbReference type="InterPro" id="IPR050265">
    <property type="entry name" value="Fe/Mn_Superoxide_Dismutase"/>
</dbReference>
<dbReference type="InterPro" id="IPR001189">
    <property type="entry name" value="Mn/Fe_SOD"/>
</dbReference>
<dbReference type="InterPro" id="IPR019833">
    <property type="entry name" value="Mn/Fe_SOD_BS"/>
</dbReference>
<dbReference type="InterPro" id="IPR019832">
    <property type="entry name" value="Mn/Fe_SOD_C"/>
</dbReference>
<dbReference type="InterPro" id="IPR019831">
    <property type="entry name" value="Mn/Fe_SOD_N"/>
</dbReference>
<dbReference type="InterPro" id="IPR036324">
    <property type="entry name" value="Mn/Fe_SOD_N_sf"/>
</dbReference>
<dbReference type="InterPro" id="IPR036314">
    <property type="entry name" value="SOD_C_sf"/>
</dbReference>
<dbReference type="PANTHER" id="PTHR11404">
    <property type="entry name" value="SUPEROXIDE DISMUTASE 2"/>
    <property type="match status" value="1"/>
</dbReference>
<dbReference type="PANTHER" id="PTHR11404:SF6">
    <property type="entry name" value="SUPEROXIDE DISMUTASE [MN], MITOCHONDRIAL"/>
    <property type="match status" value="1"/>
</dbReference>
<dbReference type="Pfam" id="PF02777">
    <property type="entry name" value="Sod_Fe_C"/>
    <property type="match status" value="1"/>
</dbReference>
<dbReference type="Pfam" id="PF00081">
    <property type="entry name" value="Sod_Fe_N"/>
    <property type="match status" value="1"/>
</dbReference>
<dbReference type="PIRSF" id="PIRSF000349">
    <property type="entry name" value="SODismutase"/>
    <property type="match status" value="1"/>
</dbReference>
<dbReference type="PRINTS" id="PR01703">
    <property type="entry name" value="MNSODISMTASE"/>
</dbReference>
<dbReference type="SUPFAM" id="SSF54719">
    <property type="entry name" value="Fe,Mn superoxide dismutase (SOD), C-terminal domain"/>
    <property type="match status" value="1"/>
</dbReference>
<dbReference type="SUPFAM" id="SSF46609">
    <property type="entry name" value="Fe,Mn superoxide dismutase (SOD), N-terminal domain"/>
    <property type="match status" value="1"/>
</dbReference>
<dbReference type="PROSITE" id="PS00088">
    <property type="entry name" value="SOD_MN"/>
    <property type="match status" value="1"/>
</dbReference>
<comment type="function">
    <text>Destroys superoxide anion radicals which are normally produced within the cells and which are toxic to biological systems.</text>
</comment>
<comment type="catalytic activity">
    <reaction>
        <text>2 superoxide + 2 H(+) = H2O2 + O2</text>
        <dbReference type="Rhea" id="RHEA:20696"/>
        <dbReference type="ChEBI" id="CHEBI:15378"/>
        <dbReference type="ChEBI" id="CHEBI:15379"/>
        <dbReference type="ChEBI" id="CHEBI:16240"/>
        <dbReference type="ChEBI" id="CHEBI:18421"/>
        <dbReference type="EC" id="1.15.1.1"/>
    </reaction>
</comment>
<comment type="cofactor">
    <cofactor evidence="1">
        <name>Mn(2+)</name>
        <dbReference type="ChEBI" id="CHEBI:29035"/>
    </cofactor>
    <text evidence="1">Binds 1 Mn(2+) ion per subunit.</text>
</comment>
<comment type="subunit">
    <text>Homotetramer.</text>
</comment>
<comment type="subcellular location">
    <subcellularLocation>
        <location>Mitochondrion matrix</location>
    </subcellularLocation>
</comment>
<comment type="similarity">
    <text evidence="2">Belongs to the iron/manganese superoxide dismutase family.</text>
</comment>